<dbReference type="EMBL" id="CP000687">
    <property type="protein sequence ID" value="ABY70346.1"/>
    <property type="molecule type" value="Genomic_DNA"/>
</dbReference>
<dbReference type="RefSeq" id="WP_005599282.1">
    <property type="nucleotide sequence ID" value="NC_010278.1"/>
</dbReference>
<dbReference type="SMR" id="B0BST2"/>
<dbReference type="GeneID" id="92743654"/>
<dbReference type="KEGG" id="apj:APJL_1796"/>
<dbReference type="HOGENOM" id="CLU_041575_5_2_6"/>
<dbReference type="Proteomes" id="UP000008547">
    <property type="component" value="Chromosome"/>
</dbReference>
<dbReference type="GO" id="GO:1990904">
    <property type="term" value="C:ribonucleoprotein complex"/>
    <property type="evidence" value="ECO:0007669"/>
    <property type="project" value="UniProtKB-KW"/>
</dbReference>
<dbReference type="GO" id="GO:0005840">
    <property type="term" value="C:ribosome"/>
    <property type="evidence" value="ECO:0007669"/>
    <property type="project" value="UniProtKB-KW"/>
</dbReference>
<dbReference type="GO" id="GO:0019843">
    <property type="term" value="F:rRNA binding"/>
    <property type="evidence" value="ECO:0007669"/>
    <property type="project" value="UniProtKB-UniRule"/>
</dbReference>
<dbReference type="GO" id="GO:0003735">
    <property type="term" value="F:structural constituent of ribosome"/>
    <property type="evidence" value="ECO:0007669"/>
    <property type="project" value="InterPro"/>
</dbReference>
<dbReference type="GO" id="GO:0006412">
    <property type="term" value="P:translation"/>
    <property type="evidence" value="ECO:0007669"/>
    <property type="project" value="UniProtKB-UniRule"/>
</dbReference>
<dbReference type="FunFam" id="3.40.1370.10:FF:000001">
    <property type="entry name" value="50S ribosomal protein L4"/>
    <property type="match status" value="1"/>
</dbReference>
<dbReference type="Gene3D" id="3.40.1370.10">
    <property type="match status" value="1"/>
</dbReference>
<dbReference type="HAMAP" id="MF_01328_B">
    <property type="entry name" value="Ribosomal_uL4_B"/>
    <property type="match status" value="1"/>
</dbReference>
<dbReference type="InterPro" id="IPR002136">
    <property type="entry name" value="Ribosomal_uL4"/>
</dbReference>
<dbReference type="InterPro" id="IPR013005">
    <property type="entry name" value="Ribosomal_uL4-like"/>
</dbReference>
<dbReference type="InterPro" id="IPR023574">
    <property type="entry name" value="Ribosomal_uL4_dom_sf"/>
</dbReference>
<dbReference type="NCBIfam" id="TIGR03953">
    <property type="entry name" value="rplD_bact"/>
    <property type="match status" value="1"/>
</dbReference>
<dbReference type="PANTHER" id="PTHR10746">
    <property type="entry name" value="50S RIBOSOMAL PROTEIN L4"/>
    <property type="match status" value="1"/>
</dbReference>
<dbReference type="PANTHER" id="PTHR10746:SF6">
    <property type="entry name" value="LARGE RIBOSOMAL SUBUNIT PROTEIN UL4M"/>
    <property type="match status" value="1"/>
</dbReference>
<dbReference type="Pfam" id="PF00573">
    <property type="entry name" value="Ribosomal_L4"/>
    <property type="match status" value="1"/>
</dbReference>
<dbReference type="SUPFAM" id="SSF52166">
    <property type="entry name" value="Ribosomal protein L4"/>
    <property type="match status" value="1"/>
</dbReference>
<proteinExistence type="inferred from homology"/>
<comment type="function">
    <text evidence="1">One of the primary rRNA binding proteins, this protein initially binds near the 5'-end of the 23S rRNA. It is important during the early stages of 50S assembly. It makes multiple contacts with different domains of the 23S rRNA in the assembled 50S subunit and ribosome.</text>
</comment>
<comment type="function">
    <text evidence="1">Forms part of the polypeptide exit tunnel.</text>
</comment>
<comment type="subunit">
    <text evidence="1">Part of the 50S ribosomal subunit.</text>
</comment>
<comment type="similarity">
    <text evidence="1">Belongs to the universal ribosomal protein uL4 family.</text>
</comment>
<feature type="chain" id="PRO_1000142069" description="Large ribosomal subunit protein uL4">
    <location>
        <begin position="1"/>
        <end position="200"/>
    </location>
</feature>
<feature type="region of interest" description="Disordered" evidence="2">
    <location>
        <begin position="43"/>
        <end position="71"/>
    </location>
</feature>
<accession>B0BST2</accession>
<organism>
    <name type="scientific">Actinobacillus pleuropneumoniae serotype 3 (strain JL03)</name>
    <dbReference type="NCBI Taxonomy" id="434271"/>
    <lineage>
        <taxon>Bacteria</taxon>
        <taxon>Pseudomonadati</taxon>
        <taxon>Pseudomonadota</taxon>
        <taxon>Gammaproteobacteria</taxon>
        <taxon>Pasteurellales</taxon>
        <taxon>Pasteurellaceae</taxon>
        <taxon>Actinobacillus</taxon>
    </lineage>
</organism>
<keyword id="KW-0687">Ribonucleoprotein</keyword>
<keyword id="KW-0689">Ribosomal protein</keyword>
<keyword id="KW-0694">RNA-binding</keyword>
<keyword id="KW-0699">rRNA-binding</keyword>
<reference key="1">
    <citation type="journal article" date="2008" name="PLoS ONE">
        <title>Genome biology of Actinobacillus pleuropneumoniae JL03, an isolate of serotype 3 prevalent in China.</title>
        <authorList>
            <person name="Xu Z."/>
            <person name="Zhou Y."/>
            <person name="Li L."/>
            <person name="Zhou R."/>
            <person name="Xiao S."/>
            <person name="Wan Y."/>
            <person name="Zhang S."/>
            <person name="Wang K."/>
            <person name="Li W."/>
            <person name="Li L."/>
            <person name="Jin H."/>
            <person name="Kang M."/>
            <person name="Dalai B."/>
            <person name="Li T."/>
            <person name="Liu L."/>
            <person name="Cheng Y."/>
            <person name="Zhang L."/>
            <person name="Xu T."/>
            <person name="Zheng H."/>
            <person name="Pu S."/>
            <person name="Wang B."/>
            <person name="Gu W."/>
            <person name="Zhang X.L."/>
            <person name="Zhu G.-F."/>
            <person name="Wang S."/>
            <person name="Zhao G.-P."/>
            <person name="Chen H."/>
        </authorList>
    </citation>
    <scope>NUCLEOTIDE SEQUENCE [LARGE SCALE GENOMIC DNA]</scope>
    <source>
        <strain>JL03</strain>
    </source>
</reference>
<name>RL4_ACTPJ</name>
<protein>
    <recommendedName>
        <fullName evidence="1">Large ribosomal subunit protein uL4</fullName>
    </recommendedName>
    <alternativeName>
        <fullName evidence="3">50S ribosomal protein L4</fullName>
    </alternativeName>
</protein>
<gene>
    <name evidence="1" type="primary">rplD</name>
    <name type="ordered locus">APJL_1796</name>
</gene>
<sequence>MELQVVGANALTVSETTFGREFNEALIHQVVVAYAAGARQGSRAQKTRAEVSGSGKKPWRQKGTGRARSGDIKSPIWRSGGITFAAKPQDHSQKVNKKMYRGAIKSILSELVRQERLVVVEKFEIEAPKTKVLVQKLKDLALNDALIITANLDENLFLAARNLYKVDVRDVQGIDPVSLIAFDKVVITADAVKQIEEMLA</sequence>
<evidence type="ECO:0000255" key="1">
    <source>
        <dbReference type="HAMAP-Rule" id="MF_01328"/>
    </source>
</evidence>
<evidence type="ECO:0000256" key="2">
    <source>
        <dbReference type="SAM" id="MobiDB-lite"/>
    </source>
</evidence>
<evidence type="ECO:0000305" key="3"/>